<proteinExistence type="inferred from homology"/>
<name>MENC_KLEP3</name>
<sequence>MRVSQVYRWQIPMDAGVVLRERRLKTRDGLFIRLQEDEREGWGEISPLPGFSNETLEEAQTALLAWAQAWRDGAEPPLPTLPSVAFGISCAQAELYGELPQAADYRAAPLCSGDPDELFAKLAAMPGEKVAKVKVGLWEAVRDGMVVNLLLEAIPDLQLRLDANRAWTPLKAQQFAKYVNPAYRQRIAFLEEPCKTREDSRAFSRETGIAIAWDESLREADFRFVAEPGVRAVVIKPTLTGSVQKVQQQVAAAHALGLSAVISSSIESSLGLTQLARVAAWLTPQTIPGLDTLALMSAQLVRPWPESTLPMINIDALEPLL</sequence>
<accession>B5XNX3</accession>
<gene>
    <name evidence="1" type="primary">menC</name>
    <name type="ordered locus">KPK_1490</name>
</gene>
<dbReference type="EC" id="4.2.1.113" evidence="1"/>
<dbReference type="EMBL" id="CP000964">
    <property type="protein sequence ID" value="ACI07304.1"/>
    <property type="molecule type" value="Genomic_DNA"/>
</dbReference>
<dbReference type="SMR" id="B5XNX3"/>
<dbReference type="KEGG" id="kpe:KPK_1490"/>
<dbReference type="HOGENOM" id="CLU_030273_0_1_6"/>
<dbReference type="UniPathway" id="UPA00079"/>
<dbReference type="UniPathway" id="UPA01057">
    <property type="reaction ID" value="UER00165"/>
</dbReference>
<dbReference type="Proteomes" id="UP000001734">
    <property type="component" value="Chromosome"/>
</dbReference>
<dbReference type="GO" id="GO:0000287">
    <property type="term" value="F:magnesium ion binding"/>
    <property type="evidence" value="ECO:0007669"/>
    <property type="project" value="UniProtKB-UniRule"/>
</dbReference>
<dbReference type="GO" id="GO:0043748">
    <property type="term" value="F:O-succinylbenzoate synthase activity"/>
    <property type="evidence" value="ECO:0007669"/>
    <property type="project" value="UniProtKB-EC"/>
</dbReference>
<dbReference type="GO" id="GO:0009234">
    <property type="term" value="P:menaquinone biosynthetic process"/>
    <property type="evidence" value="ECO:0007669"/>
    <property type="project" value="UniProtKB-UniRule"/>
</dbReference>
<dbReference type="CDD" id="cd03320">
    <property type="entry name" value="OSBS"/>
    <property type="match status" value="1"/>
</dbReference>
<dbReference type="FunFam" id="3.20.20.120:FF:000006">
    <property type="entry name" value="o-succinylbenzoate synthase"/>
    <property type="match status" value="1"/>
</dbReference>
<dbReference type="Gene3D" id="3.20.20.120">
    <property type="entry name" value="Enolase-like C-terminal domain"/>
    <property type="match status" value="1"/>
</dbReference>
<dbReference type="Gene3D" id="3.30.390.10">
    <property type="entry name" value="Enolase-like, N-terminal domain"/>
    <property type="match status" value="1"/>
</dbReference>
<dbReference type="HAMAP" id="MF_00470">
    <property type="entry name" value="MenC_1"/>
    <property type="match status" value="1"/>
</dbReference>
<dbReference type="InterPro" id="IPR036849">
    <property type="entry name" value="Enolase-like_C_sf"/>
</dbReference>
<dbReference type="InterPro" id="IPR029017">
    <property type="entry name" value="Enolase-like_N"/>
</dbReference>
<dbReference type="InterPro" id="IPR029065">
    <property type="entry name" value="Enolase_C-like"/>
</dbReference>
<dbReference type="InterPro" id="IPR013342">
    <property type="entry name" value="Mandelate_racemase_C"/>
</dbReference>
<dbReference type="InterPro" id="IPR010196">
    <property type="entry name" value="OSB_synthase_MenC1"/>
</dbReference>
<dbReference type="InterPro" id="IPR041338">
    <property type="entry name" value="OSBS_N"/>
</dbReference>
<dbReference type="NCBIfam" id="TIGR01927">
    <property type="entry name" value="menC_gam_Gplu"/>
    <property type="match status" value="1"/>
</dbReference>
<dbReference type="NCBIfam" id="NF003473">
    <property type="entry name" value="PRK05105.1"/>
    <property type="match status" value="1"/>
</dbReference>
<dbReference type="PANTHER" id="PTHR48073:SF2">
    <property type="entry name" value="O-SUCCINYLBENZOATE SYNTHASE"/>
    <property type="match status" value="1"/>
</dbReference>
<dbReference type="PANTHER" id="PTHR48073">
    <property type="entry name" value="O-SUCCINYLBENZOATE SYNTHASE-RELATED"/>
    <property type="match status" value="1"/>
</dbReference>
<dbReference type="Pfam" id="PF21508">
    <property type="entry name" value="MenC_N"/>
    <property type="match status" value="1"/>
</dbReference>
<dbReference type="Pfam" id="PF13378">
    <property type="entry name" value="MR_MLE_C"/>
    <property type="match status" value="1"/>
</dbReference>
<dbReference type="SFLD" id="SFLDG00180">
    <property type="entry name" value="muconate_cycloisomerase"/>
    <property type="match status" value="1"/>
</dbReference>
<dbReference type="SFLD" id="SFLDF00009">
    <property type="entry name" value="o-succinylbenzoate_synthase"/>
    <property type="match status" value="1"/>
</dbReference>
<dbReference type="SMART" id="SM00922">
    <property type="entry name" value="MR_MLE"/>
    <property type="match status" value="1"/>
</dbReference>
<dbReference type="SUPFAM" id="SSF51604">
    <property type="entry name" value="Enolase C-terminal domain-like"/>
    <property type="match status" value="1"/>
</dbReference>
<dbReference type="SUPFAM" id="SSF54826">
    <property type="entry name" value="Enolase N-terminal domain-like"/>
    <property type="match status" value="1"/>
</dbReference>
<protein>
    <recommendedName>
        <fullName evidence="1">o-succinylbenzoate synthase</fullName>
        <shortName evidence="1">OSB synthase</shortName>
        <shortName evidence="1">OSBS</shortName>
        <ecNumber evidence="1">4.2.1.113</ecNumber>
    </recommendedName>
    <alternativeName>
        <fullName evidence="1">4-(2'-carboxyphenyl)-4-oxybutyric acid synthase</fullName>
    </alternativeName>
    <alternativeName>
        <fullName evidence="1">o-succinylbenzoic acid synthase</fullName>
    </alternativeName>
</protein>
<evidence type="ECO:0000255" key="1">
    <source>
        <dbReference type="HAMAP-Rule" id="MF_00470"/>
    </source>
</evidence>
<organism>
    <name type="scientific">Klebsiella pneumoniae (strain 342)</name>
    <dbReference type="NCBI Taxonomy" id="507522"/>
    <lineage>
        <taxon>Bacteria</taxon>
        <taxon>Pseudomonadati</taxon>
        <taxon>Pseudomonadota</taxon>
        <taxon>Gammaproteobacteria</taxon>
        <taxon>Enterobacterales</taxon>
        <taxon>Enterobacteriaceae</taxon>
        <taxon>Klebsiella/Raoultella group</taxon>
        <taxon>Klebsiella</taxon>
        <taxon>Klebsiella pneumoniae complex</taxon>
    </lineage>
</organism>
<reference key="1">
    <citation type="journal article" date="2008" name="PLoS Genet.">
        <title>Complete genome sequence of the N2-fixing broad host range endophyte Klebsiella pneumoniae 342 and virulence predictions verified in mice.</title>
        <authorList>
            <person name="Fouts D.E."/>
            <person name="Tyler H.L."/>
            <person name="DeBoy R.T."/>
            <person name="Daugherty S."/>
            <person name="Ren Q."/>
            <person name="Badger J.H."/>
            <person name="Durkin A.S."/>
            <person name="Huot H."/>
            <person name="Shrivastava S."/>
            <person name="Kothari S."/>
            <person name="Dodson R.J."/>
            <person name="Mohamoud Y."/>
            <person name="Khouri H."/>
            <person name="Roesch L.F.W."/>
            <person name="Krogfelt K.A."/>
            <person name="Struve C."/>
            <person name="Triplett E.W."/>
            <person name="Methe B.A."/>
        </authorList>
    </citation>
    <scope>NUCLEOTIDE SEQUENCE [LARGE SCALE GENOMIC DNA]</scope>
    <source>
        <strain>342</strain>
    </source>
</reference>
<feature type="chain" id="PRO_1000125575" description="o-succinylbenzoate synthase">
    <location>
        <begin position="1"/>
        <end position="321"/>
    </location>
</feature>
<feature type="active site" description="Proton donor" evidence="1">
    <location>
        <position position="134"/>
    </location>
</feature>
<feature type="active site" description="Proton acceptor" evidence="1">
    <location>
        <position position="236"/>
    </location>
</feature>
<feature type="binding site" evidence="1">
    <location>
        <position position="162"/>
    </location>
    <ligand>
        <name>Mg(2+)</name>
        <dbReference type="ChEBI" id="CHEBI:18420"/>
    </ligand>
</feature>
<feature type="binding site" evidence="1">
    <location>
        <position position="191"/>
    </location>
    <ligand>
        <name>Mg(2+)</name>
        <dbReference type="ChEBI" id="CHEBI:18420"/>
    </ligand>
</feature>
<feature type="binding site" evidence="1">
    <location>
        <position position="214"/>
    </location>
    <ligand>
        <name>Mg(2+)</name>
        <dbReference type="ChEBI" id="CHEBI:18420"/>
    </ligand>
</feature>
<comment type="function">
    <text evidence="1">Converts 2-succinyl-6-hydroxy-2,4-cyclohexadiene-1-carboxylate (SHCHC) to 2-succinylbenzoate (OSB).</text>
</comment>
<comment type="catalytic activity">
    <reaction evidence="1">
        <text>(1R,6R)-6-hydroxy-2-succinyl-cyclohexa-2,4-diene-1-carboxylate = 2-succinylbenzoate + H2O</text>
        <dbReference type="Rhea" id="RHEA:10196"/>
        <dbReference type="ChEBI" id="CHEBI:15377"/>
        <dbReference type="ChEBI" id="CHEBI:18325"/>
        <dbReference type="ChEBI" id="CHEBI:58689"/>
        <dbReference type="EC" id="4.2.1.113"/>
    </reaction>
</comment>
<comment type="cofactor">
    <cofactor evidence="1">
        <name>a divalent metal cation</name>
        <dbReference type="ChEBI" id="CHEBI:60240"/>
    </cofactor>
</comment>
<comment type="pathway">
    <text evidence="1">Quinol/quinone metabolism; 1,4-dihydroxy-2-naphthoate biosynthesis; 1,4-dihydroxy-2-naphthoate from chorismate: step 4/7.</text>
</comment>
<comment type="pathway">
    <text evidence="1">Quinol/quinone metabolism; menaquinone biosynthesis.</text>
</comment>
<comment type="similarity">
    <text evidence="1">Belongs to the mandelate racemase/muconate lactonizing enzyme family. MenC type 1 subfamily.</text>
</comment>
<keyword id="KW-0456">Lyase</keyword>
<keyword id="KW-0460">Magnesium</keyword>
<keyword id="KW-0474">Menaquinone biosynthesis</keyword>
<keyword id="KW-0479">Metal-binding</keyword>